<name>DNAK_CUTAK</name>
<protein>
    <recommendedName>
        <fullName>Chaperone protein DnaK</fullName>
    </recommendedName>
    <alternativeName>
        <fullName>HSP70</fullName>
    </alternativeName>
    <alternativeName>
        <fullName>Heat shock 70 kDa protein</fullName>
    </alternativeName>
    <alternativeName>
        <fullName>Heat shock protein 70</fullName>
    </alternativeName>
</protein>
<organism>
    <name type="scientific">Cutibacterium acnes (strain DSM 16379 / KPA171202)</name>
    <name type="common">Propionibacterium acnes</name>
    <dbReference type="NCBI Taxonomy" id="267747"/>
    <lineage>
        <taxon>Bacteria</taxon>
        <taxon>Bacillati</taxon>
        <taxon>Actinomycetota</taxon>
        <taxon>Actinomycetes</taxon>
        <taxon>Propionibacteriales</taxon>
        <taxon>Propionibacteriaceae</taxon>
        <taxon>Cutibacterium</taxon>
    </lineage>
</organism>
<reference key="1">
    <citation type="journal article" date="2004" name="Science">
        <title>The complete genome sequence of Propionibacterium acnes, a commensal of human skin.</title>
        <authorList>
            <person name="Brueggemann H."/>
            <person name="Henne A."/>
            <person name="Hoster F."/>
            <person name="Liesegang H."/>
            <person name="Wiezer A."/>
            <person name="Strittmatter A."/>
            <person name="Hujer S."/>
            <person name="Duerre P."/>
            <person name="Gottschalk G."/>
        </authorList>
    </citation>
    <scope>NUCLEOTIDE SEQUENCE [LARGE SCALE GENOMIC DNA]</scope>
    <source>
        <strain>DSM 16379 / KPA171202</strain>
    </source>
</reference>
<sequence>MARSVGIDLGTTNSCVAVLEGGEPTVIPNAEGARTTPSVVAFTNSGETLVGEVAKRQAVTNVDRTVRSVKRHMGEAWTMGVDDKTYKPQQISAFILQKLKRDAEAYLGEPVTNAVITVPAYFSDAQRQATKEAGEIAGLAVDRIVNEPTAAALAYGLDKTDKDQTVLVFDLGGGTFDVSLLDISDGVFEVKATNGDNHLGGDDWDQRIVDWLVTQFKNANGIDLAADKMAKQRLQEAAERAKIELSQASETHINLPYITAGAAGPLHLDEKLTRAEFQRMTSDLLERCRTPFNAVMKDAGLNVSQIDEVILVGGSTRMPAVAELVKELAGKDPHKGVNPDEVVALGASLQAGVLKGEVKDVLLLDVTPLSLGIETKGGVMTKIIERNTTIPTKRSEVFTTAEDNQPSVMIQVFQGEREFVRDNKSLGNFELTGLMPAPRGIPQIEVSFDIDANGIVHVHAKDMATGKEQSMTVTGGSALGKDEIDRMVKEAEANAEADKKRREAVEMRNEADALAFRTEKLLDENSDKIPEDTKTPVTEAIATLKETLKGTDNDDEVKAAMDDLNQKASAMGQAIYAAAQQAQAENPQGQDAESASSESGDDTVVDAEIVDDEDEKK</sequence>
<proteinExistence type="inferred from homology"/>
<accession>P0CY99</accession>
<accession>Q9L7P1</accession>
<gene>
    <name type="primary">dnaK</name>
    <name type="ordered locus">PPA2040</name>
</gene>
<evidence type="ECO:0000250" key="1"/>
<evidence type="ECO:0000256" key="2">
    <source>
        <dbReference type="SAM" id="MobiDB-lite"/>
    </source>
</evidence>
<evidence type="ECO:0000305" key="3"/>
<dbReference type="EMBL" id="AE017283">
    <property type="protein sequence ID" value="AAT83753.1"/>
    <property type="molecule type" value="Genomic_DNA"/>
</dbReference>
<dbReference type="RefSeq" id="WP_002514483.1">
    <property type="nucleotide sequence ID" value="NZ_CP025935.1"/>
</dbReference>
<dbReference type="SMR" id="P0CY99"/>
<dbReference type="EnsemblBacteria" id="AAT83753">
    <property type="protein sequence ID" value="AAT83753"/>
    <property type="gene ID" value="PPA2040"/>
</dbReference>
<dbReference type="GeneID" id="92857987"/>
<dbReference type="KEGG" id="pac:PPA2040"/>
<dbReference type="eggNOG" id="COG0443">
    <property type="taxonomic scope" value="Bacteria"/>
</dbReference>
<dbReference type="HOGENOM" id="CLU_005965_2_4_11"/>
<dbReference type="Proteomes" id="UP000000603">
    <property type="component" value="Chromosome"/>
</dbReference>
<dbReference type="GO" id="GO:0005524">
    <property type="term" value="F:ATP binding"/>
    <property type="evidence" value="ECO:0007669"/>
    <property type="project" value="UniProtKB-UniRule"/>
</dbReference>
<dbReference type="GO" id="GO:0140662">
    <property type="term" value="F:ATP-dependent protein folding chaperone"/>
    <property type="evidence" value="ECO:0007669"/>
    <property type="project" value="InterPro"/>
</dbReference>
<dbReference type="GO" id="GO:0051082">
    <property type="term" value="F:unfolded protein binding"/>
    <property type="evidence" value="ECO:0007669"/>
    <property type="project" value="InterPro"/>
</dbReference>
<dbReference type="CDD" id="cd10234">
    <property type="entry name" value="ASKHA_NBD_HSP70_DnaK-like"/>
    <property type="match status" value="1"/>
</dbReference>
<dbReference type="FunFam" id="2.60.34.10:FF:000014">
    <property type="entry name" value="Chaperone protein DnaK HSP70"/>
    <property type="match status" value="1"/>
</dbReference>
<dbReference type="FunFam" id="1.20.1270.10:FF:000001">
    <property type="entry name" value="Molecular chaperone DnaK"/>
    <property type="match status" value="1"/>
</dbReference>
<dbReference type="FunFam" id="3.30.420.40:FF:000071">
    <property type="entry name" value="Molecular chaperone DnaK"/>
    <property type="match status" value="1"/>
</dbReference>
<dbReference type="FunFam" id="3.90.640.10:FF:000003">
    <property type="entry name" value="Molecular chaperone DnaK"/>
    <property type="match status" value="1"/>
</dbReference>
<dbReference type="Gene3D" id="1.20.1270.10">
    <property type="match status" value="1"/>
</dbReference>
<dbReference type="Gene3D" id="3.30.420.40">
    <property type="match status" value="2"/>
</dbReference>
<dbReference type="Gene3D" id="3.90.640.10">
    <property type="entry name" value="Actin, Chain A, domain 4"/>
    <property type="match status" value="1"/>
</dbReference>
<dbReference type="Gene3D" id="2.60.34.10">
    <property type="entry name" value="Substrate Binding Domain Of DNAk, Chain A, domain 1"/>
    <property type="match status" value="1"/>
</dbReference>
<dbReference type="HAMAP" id="MF_00332">
    <property type="entry name" value="DnaK"/>
    <property type="match status" value="1"/>
</dbReference>
<dbReference type="InterPro" id="IPR043129">
    <property type="entry name" value="ATPase_NBD"/>
</dbReference>
<dbReference type="InterPro" id="IPR012725">
    <property type="entry name" value="Chaperone_DnaK"/>
</dbReference>
<dbReference type="InterPro" id="IPR018181">
    <property type="entry name" value="Heat_shock_70_CS"/>
</dbReference>
<dbReference type="InterPro" id="IPR029048">
    <property type="entry name" value="HSP70_C_sf"/>
</dbReference>
<dbReference type="InterPro" id="IPR029047">
    <property type="entry name" value="HSP70_peptide-bd_sf"/>
</dbReference>
<dbReference type="InterPro" id="IPR013126">
    <property type="entry name" value="Hsp_70_fam"/>
</dbReference>
<dbReference type="NCBIfam" id="NF001413">
    <property type="entry name" value="PRK00290.1"/>
    <property type="match status" value="1"/>
</dbReference>
<dbReference type="NCBIfam" id="TIGR02350">
    <property type="entry name" value="prok_dnaK"/>
    <property type="match status" value="1"/>
</dbReference>
<dbReference type="PANTHER" id="PTHR19375">
    <property type="entry name" value="HEAT SHOCK PROTEIN 70KDA"/>
    <property type="match status" value="1"/>
</dbReference>
<dbReference type="Pfam" id="PF00012">
    <property type="entry name" value="HSP70"/>
    <property type="match status" value="2"/>
</dbReference>
<dbReference type="PRINTS" id="PR00301">
    <property type="entry name" value="HEATSHOCK70"/>
</dbReference>
<dbReference type="SUPFAM" id="SSF53067">
    <property type="entry name" value="Actin-like ATPase domain"/>
    <property type="match status" value="2"/>
</dbReference>
<dbReference type="SUPFAM" id="SSF100920">
    <property type="entry name" value="Heat shock protein 70kD (HSP70), peptide-binding domain"/>
    <property type="match status" value="1"/>
</dbReference>
<dbReference type="PROSITE" id="PS00297">
    <property type="entry name" value="HSP70_1"/>
    <property type="match status" value="1"/>
</dbReference>
<dbReference type="PROSITE" id="PS00329">
    <property type="entry name" value="HSP70_2"/>
    <property type="match status" value="1"/>
</dbReference>
<dbReference type="PROSITE" id="PS01036">
    <property type="entry name" value="HSP70_3"/>
    <property type="match status" value="1"/>
</dbReference>
<comment type="function">
    <text evidence="1">Acts as a chaperone.</text>
</comment>
<comment type="induction">
    <text evidence="1">By stress conditions e.g. heat shock (By similarity).</text>
</comment>
<comment type="similarity">
    <text evidence="3">Belongs to the heat shock protein 70 family.</text>
</comment>
<keyword id="KW-0067">ATP-binding</keyword>
<keyword id="KW-0143">Chaperone</keyword>
<keyword id="KW-0547">Nucleotide-binding</keyword>
<keyword id="KW-0597">Phosphoprotein</keyword>
<keyword id="KW-0346">Stress response</keyword>
<feature type="chain" id="PRO_0000078511" description="Chaperone protein DnaK">
    <location>
        <begin position="1"/>
        <end position="617"/>
    </location>
</feature>
<feature type="region of interest" description="Disordered" evidence="2">
    <location>
        <begin position="578"/>
        <end position="617"/>
    </location>
</feature>
<feature type="compositionally biased region" description="Low complexity" evidence="2">
    <location>
        <begin position="578"/>
        <end position="598"/>
    </location>
</feature>
<feature type="compositionally biased region" description="Acidic residues" evidence="2">
    <location>
        <begin position="599"/>
        <end position="617"/>
    </location>
</feature>
<feature type="modified residue" description="Phosphothreonine; by autocatalysis" evidence="1">
    <location>
        <position position="175"/>
    </location>
</feature>